<evidence type="ECO:0000255" key="1">
    <source>
        <dbReference type="HAMAP-Rule" id="MF_00805"/>
    </source>
</evidence>
<feature type="chain" id="PRO_1000062272" description="Citrate lyase acyl carrier protein">
    <location>
        <begin position="1"/>
        <end position="98"/>
    </location>
</feature>
<feature type="modified residue" description="O-(phosphoribosyl dephospho-coenzyme A)serine" evidence="1">
    <location>
        <position position="14"/>
    </location>
</feature>
<accession>A7ZJ03</accession>
<keyword id="KW-0963">Cytoplasm</keyword>
<keyword id="KW-0597">Phosphoprotein</keyword>
<keyword id="KW-1185">Reference proteome</keyword>
<comment type="function">
    <text evidence="1">Covalent carrier of the coenzyme of citrate lyase.</text>
</comment>
<comment type="subunit">
    <text evidence="1">Oligomer with a subunit composition of (alpha,beta,gamma)6.</text>
</comment>
<comment type="subcellular location">
    <subcellularLocation>
        <location evidence="1">Cytoplasm</location>
    </subcellularLocation>
</comment>
<comment type="similarity">
    <text evidence="1">Belongs to the CitD family.</text>
</comment>
<organism>
    <name type="scientific">Escherichia coli O139:H28 (strain E24377A / ETEC)</name>
    <dbReference type="NCBI Taxonomy" id="331111"/>
    <lineage>
        <taxon>Bacteria</taxon>
        <taxon>Pseudomonadati</taxon>
        <taxon>Pseudomonadota</taxon>
        <taxon>Gammaproteobacteria</taxon>
        <taxon>Enterobacterales</taxon>
        <taxon>Enterobacteriaceae</taxon>
        <taxon>Escherichia</taxon>
    </lineage>
</organism>
<protein>
    <recommendedName>
        <fullName evidence="1">Citrate lyase acyl carrier protein</fullName>
    </recommendedName>
    <alternativeName>
        <fullName evidence="1">Citrate lyase gamma chain</fullName>
    </alternativeName>
</protein>
<reference key="1">
    <citation type="journal article" date="2008" name="J. Bacteriol.">
        <title>The pangenome structure of Escherichia coli: comparative genomic analysis of E. coli commensal and pathogenic isolates.</title>
        <authorList>
            <person name="Rasko D.A."/>
            <person name="Rosovitz M.J."/>
            <person name="Myers G.S.A."/>
            <person name="Mongodin E.F."/>
            <person name="Fricke W.F."/>
            <person name="Gajer P."/>
            <person name="Crabtree J."/>
            <person name="Sebaihia M."/>
            <person name="Thomson N.R."/>
            <person name="Chaudhuri R."/>
            <person name="Henderson I.R."/>
            <person name="Sperandio V."/>
            <person name="Ravel J."/>
        </authorList>
    </citation>
    <scope>NUCLEOTIDE SEQUENCE [LARGE SCALE GENOMIC DNA]</scope>
    <source>
        <strain>E24377A / ETEC</strain>
    </source>
</reference>
<sequence>MKINQPAVAGTLESGDVMIRIAPLDTQDIDLQINSSVEKQFGDAIRTTILDVLARYNVRGVQLNVDDKGALDCILRARLEALLARASGIPALPWEDCQ</sequence>
<proteinExistence type="inferred from homology"/>
<name>CITD_ECO24</name>
<dbReference type="EMBL" id="CP000800">
    <property type="protein sequence ID" value="ABV17355.1"/>
    <property type="molecule type" value="Genomic_DNA"/>
</dbReference>
<dbReference type="RefSeq" id="WP_000700703.1">
    <property type="nucleotide sequence ID" value="NC_009801.1"/>
</dbReference>
<dbReference type="SMR" id="A7ZJ03"/>
<dbReference type="GeneID" id="93776868"/>
<dbReference type="KEGG" id="ecw:EcE24377A_0639"/>
<dbReference type="HOGENOM" id="CLU_158489_0_0_6"/>
<dbReference type="Proteomes" id="UP000001122">
    <property type="component" value="Chromosome"/>
</dbReference>
<dbReference type="GO" id="GO:0005737">
    <property type="term" value="C:cytoplasm"/>
    <property type="evidence" value="ECO:0007669"/>
    <property type="project" value="UniProtKB-SubCell"/>
</dbReference>
<dbReference type="HAMAP" id="MF_00805">
    <property type="entry name" value="CitD"/>
    <property type="match status" value="1"/>
</dbReference>
<dbReference type="InterPro" id="IPR006495">
    <property type="entry name" value="CitD"/>
</dbReference>
<dbReference type="InterPro" id="IPR023439">
    <property type="entry name" value="Mal_deCO2ase/Cit_lyase_ACP"/>
</dbReference>
<dbReference type="NCBIfam" id="TIGR01608">
    <property type="entry name" value="citD"/>
    <property type="match status" value="1"/>
</dbReference>
<dbReference type="NCBIfam" id="NF009726">
    <property type="entry name" value="PRK13253.1"/>
    <property type="match status" value="1"/>
</dbReference>
<dbReference type="Pfam" id="PF06857">
    <property type="entry name" value="ACP"/>
    <property type="match status" value="1"/>
</dbReference>
<dbReference type="PIRSF" id="PIRSF002736">
    <property type="entry name" value="Citrt_lyas_gamma"/>
    <property type="match status" value="1"/>
</dbReference>
<gene>
    <name evidence="1" type="primary">citD</name>
    <name type="ordered locus">EcE24377A_0639</name>
</gene>